<accession>P92701</accession>
<dbReference type="EMBL" id="X97707">
    <property type="protein sequence ID" value="CAA66295.1"/>
    <property type="molecule type" value="Genomic_DNA"/>
</dbReference>
<dbReference type="RefSeq" id="NP_007847.1">
    <property type="nucleotide sequence ID" value="NC_002083.1"/>
</dbReference>
<dbReference type="SMR" id="P92701"/>
<dbReference type="FunCoup" id="P92701">
    <property type="interactions" value="355"/>
</dbReference>
<dbReference type="STRING" id="9601.ENSPPYP00000023451"/>
<dbReference type="Ensembl" id="ENSPPYT00000024453.1">
    <property type="protein sequence ID" value="ENSPPYP00000023451.1"/>
    <property type="gene ID" value="ENSPPYG00000020974.1"/>
</dbReference>
<dbReference type="GeneID" id="808483"/>
<dbReference type="KEGG" id="pon:808483"/>
<dbReference type="CTD" id="4519"/>
<dbReference type="eggNOG" id="KOG4663">
    <property type="taxonomic scope" value="Eukaryota"/>
</dbReference>
<dbReference type="GeneTree" id="ENSGT00390000017948"/>
<dbReference type="HOGENOM" id="CLU_031114_3_0_1"/>
<dbReference type="InParanoid" id="P92701"/>
<dbReference type="OMA" id="NISAWWN"/>
<dbReference type="TreeFam" id="TF353088"/>
<dbReference type="Proteomes" id="UP000001595">
    <property type="component" value="Mitochondrion"/>
</dbReference>
<dbReference type="GO" id="GO:0005743">
    <property type="term" value="C:mitochondrial inner membrane"/>
    <property type="evidence" value="ECO:0007669"/>
    <property type="project" value="UniProtKB-SubCell"/>
</dbReference>
<dbReference type="GO" id="GO:0045275">
    <property type="term" value="C:respiratory chain complex III"/>
    <property type="evidence" value="ECO:0007669"/>
    <property type="project" value="Ensembl"/>
</dbReference>
<dbReference type="GO" id="GO:0046872">
    <property type="term" value="F:metal ion binding"/>
    <property type="evidence" value="ECO:0007669"/>
    <property type="project" value="UniProtKB-KW"/>
</dbReference>
<dbReference type="GO" id="GO:0008121">
    <property type="term" value="F:ubiquinol-cytochrome-c reductase activity"/>
    <property type="evidence" value="ECO:0007669"/>
    <property type="project" value="InterPro"/>
</dbReference>
<dbReference type="GO" id="GO:0006122">
    <property type="term" value="P:mitochondrial electron transport, ubiquinol to cytochrome c"/>
    <property type="evidence" value="ECO:0007669"/>
    <property type="project" value="TreeGrafter"/>
</dbReference>
<dbReference type="CDD" id="cd00290">
    <property type="entry name" value="cytochrome_b_C"/>
    <property type="match status" value="1"/>
</dbReference>
<dbReference type="CDD" id="cd00284">
    <property type="entry name" value="Cytochrome_b_N"/>
    <property type="match status" value="1"/>
</dbReference>
<dbReference type="FunFam" id="1.20.810.10:FF:000002">
    <property type="entry name" value="Cytochrome b"/>
    <property type="match status" value="1"/>
</dbReference>
<dbReference type="Gene3D" id="1.20.810.10">
    <property type="entry name" value="Cytochrome Bc1 Complex, Chain C"/>
    <property type="match status" value="1"/>
</dbReference>
<dbReference type="InterPro" id="IPR005798">
    <property type="entry name" value="Cyt_b/b6_C"/>
</dbReference>
<dbReference type="InterPro" id="IPR036150">
    <property type="entry name" value="Cyt_b/b6_C_sf"/>
</dbReference>
<dbReference type="InterPro" id="IPR005797">
    <property type="entry name" value="Cyt_b/b6_N"/>
</dbReference>
<dbReference type="InterPro" id="IPR027387">
    <property type="entry name" value="Cytb/b6-like_sf"/>
</dbReference>
<dbReference type="InterPro" id="IPR030689">
    <property type="entry name" value="Cytochrome_b"/>
</dbReference>
<dbReference type="InterPro" id="IPR048260">
    <property type="entry name" value="Cytochrome_b_C_euk/bac"/>
</dbReference>
<dbReference type="InterPro" id="IPR048259">
    <property type="entry name" value="Cytochrome_b_N_euk/bac"/>
</dbReference>
<dbReference type="InterPro" id="IPR016174">
    <property type="entry name" value="Di-haem_cyt_TM"/>
</dbReference>
<dbReference type="PANTHER" id="PTHR19271">
    <property type="entry name" value="CYTOCHROME B"/>
    <property type="match status" value="1"/>
</dbReference>
<dbReference type="PANTHER" id="PTHR19271:SF16">
    <property type="entry name" value="CYTOCHROME B"/>
    <property type="match status" value="1"/>
</dbReference>
<dbReference type="Pfam" id="PF00032">
    <property type="entry name" value="Cytochrom_B_C"/>
    <property type="match status" value="1"/>
</dbReference>
<dbReference type="Pfam" id="PF00033">
    <property type="entry name" value="Cytochrome_B"/>
    <property type="match status" value="1"/>
</dbReference>
<dbReference type="PIRSF" id="PIRSF038885">
    <property type="entry name" value="COB"/>
    <property type="match status" value="1"/>
</dbReference>
<dbReference type="SUPFAM" id="SSF81648">
    <property type="entry name" value="a domain/subunit of cytochrome bc1 complex (Ubiquinol-cytochrome c reductase)"/>
    <property type="match status" value="1"/>
</dbReference>
<dbReference type="SUPFAM" id="SSF81342">
    <property type="entry name" value="Transmembrane di-heme cytochromes"/>
    <property type="match status" value="1"/>
</dbReference>
<dbReference type="PROSITE" id="PS51003">
    <property type="entry name" value="CYTB_CTER"/>
    <property type="match status" value="1"/>
</dbReference>
<dbReference type="PROSITE" id="PS51002">
    <property type="entry name" value="CYTB_NTER"/>
    <property type="match status" value="1"/>
</dbReference>
<name>CYB_PONAB</name>
<evidence type="ECO:0000250" key="1"/>
<evidence type="ECO:0000250" key="2">
    <source>
        <dbReference type="UniProtKB" id="P00157"/>
    </source>
</evidence>
<evidence type="ECO:0000255" key="3">
    <source>
        <dbReference type="PROSITE-ProRule" id="PRU00967"/>
    </source>
</evidence>
<evidence type="ECO:0000255" key="4">
    <source>
        <dbReference type="PROSITE-ProRule" id="PRU00968"/>
    </source>
</evidence>
<sequence length="380" mass="42819">MTSTRKTNPLMKLINHSLIDLPTPSNISAWWNFGSLLGACLIIQITTGLFLAMHYSPDASTAFSSIAHITRDVNYGWMIRHLHANGASMFFICLFLHIGRGLYYGSFTHLETWNIGIILLFTTMMTAFMGYVLPWGQMSFWGATVITNLLSAIPYIGTDLVQWVWGGYSVNSPTLTRFFTLHFMLPFIITALTTLHLLFLHETGSNNPLGIPSHSDKITFHPYYTIKDILGLLLFLLALMTLTLLSPDLLSDPDNYTLANPLSTPPHIKPEWYFLFAYAILRSVPNKLGGVMALMLSILILTTIPALHMSKQQSMTFRPLSQFLYWLLIADLLILTWIGGQPVSYPFITISQVASTLYFTTILLLMPASSLIENHMLKWT</sequence>
<feature type="chain" id="PRO_0000061432" description="Cytochrome b">
    <location>
        <begin position="1"/>
        <end position="380"/>
    </location>
</feature>
<feature type="transmembrane region" description="Helical" evidence="2">
    <location>
        <begin position="33"/>
        <end position="53"/>
    </location>
</feature>
<feature type="transmembrane region" description="Helical" evidence="2">
    <location>
        <begin position="77"/>
        <end position="98"/>
    </location>
</feature>
<feature type="transmembrane region" description="Helical" evidence="2">
    <location>
        <begin position="113"/>
        <end position="133"/>
    </location>
</feature>
<feature type="transmembrane region" description="Helical" evidence="2">
    <location>
        <begin position="178"/>
        <end position="198"/>
    </location>
</feature>
<feature type="transmembrane region" description="Helical" evidence="2">
    <location>
        <begin position="226"/>
        <end position="246"/>
    </location>
</feature>
<feature type="transmembrane region" description="Helical" evidence="2">
    <location>
        <begin position="288"/>
        <end position="308"/>
    </location>
</feature>
<feature type="transmembrane region" description="Helical" evidence="2">
    <location>
        <begin position="320"/>
        <end position="340"/>
    </location>
</feature>
<feature type="transmembrane region" description="Helical" evidence="2">
    <location>
        <begin position="347"/>
        <end position="367"/>
    </location>
</feature>
<feature type="binding site" description="axial binding residue" evidence="2">
    <location>
        <position position="83"/>
    </location>
    <ligand>
        <name>heme b</name>
        <dbReference type="ChEBI" id="CHEBI:60344"/>
        <label>b562</label>
    </ligand>
    <ligandPart>
        <name>Fe</name>
        <dbReference type="ChEBI" id="CHEBI:18248"/>
    </ligandPart>
</feature>
<feature type="binding site" description="axial binding residue" evidence="2">
    <location>
        <position position="97"/>
    </location>
    <ligand>
        <name>heme b</name>
        <dbReference type="ChEBI" id="CHEBI:60344"/>
        <label>b566</label>
    </ligand>
    <ligandPart>
        <name>Fe</name>
        <dbReference type="ChEBI" id="CHEBI:18248"/>
    </ligandPart>
</feature>
<feature type="binding site" description="axial binding residue" evidence="2">
    <location>
        <position position="182"/>
    </location>
    <ligand>
        <name>heme b</name>
        <dbReference type="ChEBI" id="CHEBI:60344"/>
        <label>b562</label>
    </ligand>
    <ligandPart>
        <name>Fe</name>
        <dbReference type="ChEBI" id="CHEBI:18248"/>
    </ligandPart>
</feature>
<feature type="binding site" description="axial binding residue" evidence="2">
    <location>
        <position position="196"/>
    </location>
    <ligand>
        <name>heme b</name>
        <dbReference type="ChEBI" id="CHEBI:60344"/>
        <label>b566</label>
    </ligand>
    <ligandPart>
        <name>Fe</name>
        <dbReference type="ChEBI" id="CHEBI:18248"/>
    </ligandPart>
</feature>
<feature type="binding site" evidence="2">
    <location>
        <position position="201"/>
    </location>
    <ligand>
        <name>a ubiquinone</name>
        <dbReference type="ChEBI" id="CHEBI:16389"/>
    </ligand>
</feature>
<geneLocation type="mitochondrion"/>
<organism>
    <name type="scientific">Pongo abelii</name>
    <name type="common">Sumatran orangutan</name>
    <name type="synonym">Pongo pygmaeus abelii</name>
    <dbReference type="NCBI Taxonomy" id="9601"/>
    <lineage>
        <taxon>Eukaryota</taxon>
        <taxon>Metazoa</taxon>
        <taxon>Chordata</taxon>
        <taxon>Craniata</taxon>
        <taxon>Vertebrata</taxon>
        <taxon>Euteleostomi</taxon>
        <taxon>Mammalia</taxon>
        <taxon>Eutheria</taxon>
        <taxon>Euarchontoglires</taxon>
        <taxon>Primates</taxon>
        <taxon>Haplorrhini</taxon>
        <taxon>Catarrhini</taxon>
        <taxon>Hominidae</taxon>
        <taxon>Pongo</taxon>
    </lineage>
</organism>
<protein>
    <recommendedName>
        <fullName>Cytochrome b</fullName>
    </recommendedName>
    <alternativeName>
        <fullName>Complex III subunit 3</fullName>
    </alternativeName>
    <alternativeName>
        <fullName>Complex III subunit III</fullName>
    </alternativeName>
    <alternativeName>
        <fullName>Cytochrome b-c1 complex subunit 3</fullName>
    </alternativeName>
    <alternativeName>
        <fullName>Ubiquinol-cytochrome-c reductase complex cytochrome b subunit</fullName>
    </alternativeName>
</protein>
<comment type="function">
    <text evidence="2">Component of the ubiquinol-cytochrome c reductase complex (complex III or cytochrome b-c1 complex) that is part of the mitochondrial respiratory chain. The b-c1 complex mediates electron transfer from ubiquinol to cytochrome c. Contributes to the generation of a proton gradient across the mitochondrial membrane that is then used for ATP synthesis.</text>
</comment>
<comment type="cofactor">
    <cofactor evidence="2">
        <name>heme b</name>
        <dbReference type="ChEBI" id="CHEBI:60344"/>
    </cofactor>
    <text evidence="2">Binds 2 heme b groups non-covalently.</text>
</comment>
<comment type="subunit">
    <text evidence="2">The cytochrome bc1 complex contains 11 subunits: 3 respiratory subunits (MT-CYB, CYC1 and UQCRFS1), 2 core proteins (UQCRC1 and UQCRC2) and 6 low-molecular weight proteins (UQCRH/QCR6, UQCRB/QCR7, UQCRQ/QCR8, UQCR10/QCR9, UQCR11/QCR10 and a cleavage product of UQCRFS1). This cytochrome bc1 complex then forms a dimer.</text>
</comment>
<comment type="subcellular location">
    <subcellularLocation>
        <location evidence="2">Mitochondrion inner membrane</location>
        <topology evidence="2">Multi-pass membrane protein</topology>
    </subcellularLocation>
</comment>
<comment type="miscellaneous">
    <text evidence="1">Heme 1 (or BL or b562) is low-potential and absorbs at about 562 nm, and heme 2 (or BH or b566) is high-potential and absorbs at about 566 nm.</text>
</comment>
<comment type="similarity">
    <text evidence="3 4">Belongs to the cytochrome b family.</text>
</comment>
<comment type="caution">
    <text evidence="2">The full-length protein contains only eight transmembrane helices, not nine as predicted by bioinformatics tools.</text>
</comment>
<keyword id="KW-0249">Electron transport</keyword>
<keyword id="KW-0349">Heme</keyword>
<keyword id="KW-0408">Iron</keyword>
<keyword id="KW-0472">Membrane</keyword>
<keyword id="KW-0479">Metal-binding</keyword>
<keyword id="KW-0496">Mitochondrion</keyword>
<keyword id="KW-0999">Mitochondrion inner membrane</keyword>
<keyword id="KW-1185">Reference proteome</keyword>
<keyword id="KW-0679">Respiratory chain</keyword>
<keyword id="KW-0812">Transmembrane</keyword>
<keyword id="KW-1133">Transmembrane helix</keyword>
<keyword id="KW-0813">Transport</keyword>
<keyword id="KW-0830">Ubiquinone</keyword>
<reference key="1">
    <citation type="journal article" date="1996" name="J. Mol. Evol.">
        <title>The mitochondrial DNA molecule of Sumatran orangutan and a molecular proposal for two (Bornean and Sumatran) species of orangutan.</title>
        <authorList>
            <person name="Xu X."/>
            <person name="Arnason U."/>
        </authorList>
    </citation>
    <scope>NUCLEOTIDE SEQUENCE [LARGE SCALE GENOMIC DNA]</scope>
</reference>
<proteinExistence type="inferred from homology"/>
<gene>
    <name type="primary">MT-CYB</name>
    <name type="synonym">COB</name>
    <name type="synonym">CYTB</name>
    <name type="synonym">MTCYB</name>
</gene>